<accession>Q1GIQ5</accession>
<name>GLMU_RUEST</name>
<sequence length="449" mass="47193">MSTALVILAAGKGTRMNSDLPKVLHQIAHAPMLEHAMRAGGALDPERTVVVAGHEAEMVRAATAEIAPEATVVLQEEQLGTGHAVLQARAALEGFRGDVVVLYGDTPFVSAETLERMIEARSRADLVILGFEAADPARYGRLIMQGESLEKIVEFKDASDAERAITFCNSGLMACNAEVMFGLLDQVGNDNASGEYYLTDLVELARAEGLSVTAVSCPEAETLGINSRADLAAAEAVFQAHARAELLDIGVTLTAPETVHLAFDTIIGRDTVIEPNVVFGPGVTVESGALIRAFSHLEGCHVSRGAKVGPYARLRPGAELAEDTHVGNFVEIKNAEIAAGAKVNHLTYIGDASVGEATNIGAGTITCNYDGVMKHRTEIGARAFIGSNTCLVAPVTVGDEAMTATGAVITKDVADGDLAIARVQQTNKPGRARKLMDMLRAKKAAKAKG</sequence>
<dbReference type="EC" id="2.7.7.23" evidence="1"/>
<dbReference type="EC" id="2.3.1.157" evidence="1"/>
<dbReference type="EMBL" id="CP000377">
    <property type="protein sequence ID" value="ABF63461.1"/>
    <property type="molecule type" value="Genomic_DNA"/>
</dbReference>
<dbReference type="RefSeq" id="WP_011538073.1">
    <property type="nucleotide sequence ID" value="NC_008044.1"/>
</dbReference>
<dbReference type="SMR" id="Q1GIQ5"/>
<dbReference type="STRING" id="292414.TM1040_0728"/>
<dbReference type="KEGG" id="sit:TM1040_0728"/>
<dbReference type="eggNOG" id="COG1207">
    <property type="taxonomic scope" value="Bacteria"/>
</dbReference>
<dbReference type="HOGENOM" id="CLU_029499_15_2_5"/>
<dbReference type="OrthoDB" id="9775031at2"/>
<dbReference type="UniPathway" id="UPA00113">
    <property type="reaction ID" value="UER00532"/>
</dbReference>
<dbReference type="UniPathway" id="UPA00113">
    <property type="reaction ID" value="UER00533"/>
</dbReference>
<dbReference type="UniPathway" id="UPA00973"/>
<dbReference type="Proteomes" id="UP000000636">
    <property type="component" value="Chromosome"/>
</dbReference>
<dbReference type="GO" id="GO:0005737">
    <property type="term" value="C:cytoplasm"/>
    <property type="evidence" value="ECO:0007669"/>
    <property type="project" value="UniProtKB-SubCell"/>
</dbReference>
<dbReference type="GO" id="GO:0016020">
    <property type="term" value="C:membrane"/>
    <property type="evidence" value="ECO:0007669"/>
    <property type="project" value="GOC"/>
</dbReference>
<dbReference type="GO" id="GO:0019134">
    <property type="term" value="F:glucosamine-1-phosphate N-acetyltransferase activity"/>
    <property type="evidence" value="ECO:0007669"/>
    <property type="project" value="UniProtKB-UniRule"/>
</dbReference>
<dbReference type="GO" id="GO:0000287">
    <property type="term" value="F:magnesium ion binding"/>
    <property type="evidence" value="ECO:0007669"/>
    <property type="project" value="UniProtKB-UniRule"/>
</dbReference>
<dbReference type="GO" id="GO:0003977">
    <property type="term" value="F:UDP-N-acetylglucosamine diphosphorylase activity"/>
    <property type="evidence" value="ECO:0007669"/>
    <property type="project" value="UniProtKB-UniRule"/>
</dbReference>
<dbReference type="GO" id="GO:0000902">
    <property type="term" value="P:cell morphogenesis"/>
    <property type="evidence" value="ECO:0007669"/>
    <property type="project" value="UniProtKB-UniRule"/>
</dbReference>
<dbReference type="GO" id="GO:0071555">
    <property type="term" value="P:cell wall organization"/>
    <property type="evidence" value="ECO:0007669"/>
    <property type="project" value="UniProtKB-KW"/>
</dbReference>
<dbReference type="GO" id="GO:0009245">
    <property type="term" value="P:lipid A biosynthetic process"/>
    <property type="evidence" value="ECO:0007669"/>
    <property type="project" value="UniProtKB-UniRule"/>
</dbReference>
<dbReference type="GO" id="GO:0009252">
    <property type="term" value="P:peptidoglycan biosynthetic process"/>
    <property type="evidence" value="ECO:0007669"/>
    <property type="project" value="UniProtKB-UniRule"/>
</dbReference>
<dbReference type="GO" id="GO:0008360">
    <property type="term" value="P:regulation of cell shape"/>
    <property type="evidence" value="ECO:0007669"/>
    <property type="project" value="UniProtKB-KW"/>
</dbReference>
<dbReference type="GO" id="GO:0006048">
    <property type="term" value="P:UDP-N-acetylglucosamine biosynthetic process"/>
    <property type="evidence" value="ECO:0007669"/>
    <property type="project" value="UniProtKB-UniPathway"/>
</dbReference>
<dbReference type="CDD" id="cd02540">
    <property type="entry name" value="GT2_GlmU_N_bac"/>
    <property type="match status" value="1"/>
</dbReference>
<dbReference type="CDD" id="cd03353">
    <property type="entry name" value="LbH_GlmU_C"/>
    <property type="match status" value="1"/>
</dbReference>
<dbReference type="Gene3D" id="2.160.10.10">
    <property type="entry name" value="Hexapeptide repeat proteins"/>
    <property type="match status" value="1"/>
</dbReference>
<dbReference type="Gene3D" id="3.90.550.10">
    <property type="entry name" value="Spore Coat Polysaccharide Biosynthesis Protein SpsA, Chain A"/>
    <property type="match status" value="1"/>
</dbReference>
<dbReference type="HAMAP" id="MF_01631">
    <property type="entry name" value="GlmU"/>
    <property type="match status" value="1"/>
</dbReference>
<dbReference type="InterPro" id="IPR005882">
    <property type="entry name" value="Bifunctional_GlmU"/>
</dbReference>
<dbReference type="InterPro" id="IPR050065">
    <property type="entry name" value="GlmU-like"/>
</dbReference>
<dbReference type="InterPro" id="IPR038009">
    <property type="entry name" value="GlmU_C_LbH"/>
</dbReference>
<dbReference type="InterPro" id="IPR001451">
    <property type="entry name" value="Hexapep"/>
</dbReference>
<dbReference type="InterPro" id="IPR025877">
    <property type="entry name" value="MobA-like_NTP_Trfase"/>
</dbReference>
<dbReference type="InterPro" id="IPR029044">
    <property type="entry name" value="Nucleotide-diphossugar_trans"/>
</dbReference>
<dbReference type="InterPro" id="IPR011004">
    <property type="entry name" value="Trimer_LpxA-like_sf"/>
</dbReference>
<dbReference type="NCBIfam" id="TIGR01173">
    <property type="entry name" value="glmU"/>
    <property type="match status" value="1"/>
</dbReference>
<dbReference type="NCBIfam" id="NF010933">
    <property type="entry name" value="PRK14353.1"/>
    <property type="match status" value="1"/>
</dbReference>
<dbReference type="PANTHER" id="PTHR43584:SF3">
    <property type="entry name" value="BIFUNCTIONAL PROTEIN GLMU"/>
    <property type="match status" value="1"/>
</dbReference>
<dbReference type="PANTHER" id="PTHR43584">
    <property type="entry name" value="NUCLEOTIDYL TRANSFERASE"/>
    <property type="match status" value="1"/>
</dbReference>
<dbReference type="Pfam" id="PF00132">
    <property type="entry name" value="Hexapep"/>
    <property type="match status" value="1"/>
</dbReference>
<dbReference type="Pfam" id="PF12804">
    <property type="entry name" value="NTP_transf_3"/>
    <property type="match status" value="1"/>
</dbReference>
<dbReference type="SUPFAM" id="SSF53448">
    <property type="entry name" value="Nucleotide-diphospho-sugar transferases"/>
    <property type="match status" value="1"/>
</dbReference>
<dbReference type="SUPFAM" id="SSF51161">
    <property type="entry name" value="Trimeric LpxA-like enzymes"/>
    <property type="match status" value="1"/>
</dbReference>
<keyword id="KW-0012">Acyltransferase</keyword>
<keyword id="KW-0133">Cell shape</keyword>
<keyword id="KW-0961">Cell wall biogenesis/degradation</keyword>
<keyword id="KW-0963">Cytoplasm</keyword>
<keyword id="KW-0460">Magnesium</keyword>
<keyword id="KW-0479">Metal-binding</keyword>
<keyword id="KW-0511">Multifunctional enzyme</keyword>
<keyword id="KW-0548">Nucleotidyltransferase</keyword>
<keyword id="KW-0573">Peptidoglycan synthesis</keyword>
<keyword id="KW-1185">Reference proteome</keyword>
<keyword id="KW-0677">Repeat</keyword>
<keyword id="KW-0808">Transferase</keyword>
<protein>
    <recommendedName>
        <fullName evidence="1">Bifunctional protein GlmU</fullName>
    </recommendedName>
    <domain>
        <recommendedName>
            <fullName evidence="1">UDP-N-acetylglucosamine pyrophosphorylase</fullName>
            <ecNumber evidence="1">2.7.7.23</ecNumber>
        </recommendedName>
        <alternativeName>
            <fullName evidence="1">N-acetylglucosamine-1-phosphate uridyltransferase</fullName>
        </alternativeName>
    </domain>
    <domain>
        <recommendedName>
            <fullName evidence="1">Glucosamine-1-phosphate N-acetyltransferase</fullName>
            <ecNumber evidence="1">2.3.1.157</ecNumber>
        </recommendedName>
    </domain>
</protein>
<gene>
    <name evidence="1" type="primary">glmU</name>
    <name type="ordered locus">TM1040_0728</name>
</gene>
<organism>
    <name type="scientific">Ruegeria sp. (strain TM1040)</name>
    <name type="common">Silicibacter sp.</name>
    <dbReference type="NCBI Taxonomy" id="292414"/>
    <lineage>
        <taxon>Bacteria</taxon>
        <taxon>Pseudomonadati</taxon>
        <taxon>Pseudomonadota</taxon>
        <taxon>Alphaproteobacteria</taxon>
        <taxon>Rhodobacterales</taxon>
        <taxon>Roseobacteraceae</taxon>
        <taxon>Ruegeria</taxon>
    </lineage>
</organism>
<reference key="1">
    <citation type="submission" date="2006-05" db="EMBL/GenBank/DDBJ databases">
        <title>Complete sequence of chromosome of Silicibacter sp. TM1040.</title>
        <authorList>
            <consortium name="US DOE Joint Genome Institute"/>
            <person name="Copeland A."/>
            <person name="Lucas S."/>
            <person name="Lapidus A."/>
            <person name="Barry K."/>
            <person name="Detter J.C."/>
            <person name="Glavina del Rio T."/>
            <person name="Hammon N."/>
            <person name="Israni S."/>
            <person name="Dalin E."/>
            <person name="Tice H."/>
            <person name="Pitluck S."/>
            <person name="Brettin T."/>
            <person name="Bruce D."/>
            <person name="Han C."/>
            <person name="Tapia R."/>
            <person name="Goodwin L."/>
            <person name="Thompson L.S."/>
            <person name="Gilna P."/>
            <person name="Schmutz J."/>
            <person name="Larimer F."/>
            <person name="Land M."/>
            <person name="Hauser L."/>
            <person name="Kyrpides N."/>
            <person name="Kim E."/>
            <person name="Belas R."/>
            <person name="Moran M.A."/>
            <person name="Buchan A."/>
            <person name="Gonzalez J.M."/>
            <person name="Schell M.A."/>
            <person name="Sun F."/>
            <person name="Richardson P."/>
        </authorList>
    </citation>
    <scope>NUCLEOTIDE SEQUENCE [LARGE SCALE GENOMIC DNA]</scope>
    <source>
        <strain>TM1040</strain>
    </source>
</reference>
<feature type="chain" id="PRO_0000263157" description="Bifunctional protein GlmU">
    <location>
        <begin position="1"/>
        <end position="449"/>
    </location>
</feature>
<feature type="region of interest" description="Pyrophosphorylase" evidence="1">
    <location>
        <begin position="1"/>
        <end position="228"/>
    </location>
</feature>
<feature type="region of interest" description="Linker" evidence="1">
    <location>
        <begin position="229"/>
        <end position="249"/>
    </location>
</feature>
<feature type="region of interest" description="N-acetyltransferase" evidence="1">
    <location>
        <begin position="250"/>
        <end position="449"/>
    </location>
</feature>
<feature type="active site" description="Proton acceptor" evidence="1">
    <location>
        <position position="345"/>
    </location>
</feature>
<feature type="binding site" evidence="1">
    <location>
        <begin position="8"/>
        <end position="11"/>
    </location>
    <ligand>
        <name>UDP-N-acetyl-alpha-D-glucosamine</name>
        <dbReference type="ChEBI" id="CHEBI:57705"/>
    </ligand>
</feature>
<feature type="binding site" evidence="1">
    <location>
        <position position="22"/>
    </location>
    <ligand>
        <name>UDP-N-acetyl-alpha-D-glucosamine</name>
        <dbReference type="ChEBI" id="CHEBI:57705"/>
    </ligand>
</feature>
<feature type="binding site" evidence="1">
    <location>
        <position position="75"/>
    </location>
    <ligand>
        <name>UDP-N-acetyl-alpha-D-glucosamine</name>
        <dbReference type="ChEBI" id="CHEBI:57705"/>
    </ligand>
</feature>
<feature type="binding site" evidence="1">
    <location>
        <begin position="80"/>
        <end position="81"/>
    </location>
    <ligand>
        <name>UDP-N-acetyl-alpha-D-glucosamine</name>
        <dbReference type="ChEBI" id="CHEBI:57705"/>
    </ligand>
</feature>
<feature type="binding site" evidence="1">
    <location>
        <begin position="103"/>
        <end position="105"/>
    </location>
    <ligand>
        <name>UDP-N-acetyl-alpha-D-glucosamine</name>
        <dbReference type="ChEBI" id="CHEBI:57705"/>
    </ligand>
</feature>
<feature type="binding site" evidence="1">
    <location>
        <position position="105"/>
    </location>
    <ligand>
        <name>Mg(2+)</name>
        <dbReference type="ChEBI" id="CHEBI:18420"/>
    </ligand>
</feature>
<feature type="binding site" evidence="1">
    <location>
        <position position="140"/>
    </location>
    <ligand>
        <name>UDP-N-acetyl-alpha-D-glucosamine</name>
        <dbReference type="ChEBI" id="CHEBI:57705"/>
    </ligand>
</feature>
<feature type="binding site" evidence="1">
    <location>
        <position position="154"/>
    </location>
    <ligand>
        <name>UDP-N-acetyl-alpha-D-glucosamine</name>
        <dbReference type="ChEBI" id="CHEBI:57705"/>
    </ligand>
</feature>
<feature type="binding site" evidence="1">
    <location>
        <position position="169"/>
    </location>
    <ligand>
        <name>UDP-N-acetyl-alpha-D-glucosamine</name>
        <dbReference type="ChEBI" id="CHEBI:57705"/>
    </ligand>
</feature>
<feature type="binding site" evidence="1">
    <location>
        <position position="226"/>
    </location>
    <ligand>
        <name>Mg(2+)</name>
        <dbReference type="ChEBI" id="CHEBI:18420"/>
    </ligand>
</feature>
<feature type="binding site" evidence="1">
    <location>
        <position position="226"/>
    </location>
    <ligand>
        <name>UDP-N-acetyl-alpha-D-glucosamine</name>
        <dbReference type="ChEBI" id="CHEBI:57705"/>
    </ligand>
</feature>
<feature type="binding site" evidence="1">
    <location>
        <position position="315"/>
    </location>
    <ligand>
        <name>UDP-N-acetyl-alpha-D-glucosamine</name>
        <dbReference type="ChEBI" id="CHEBI:57705"/>
    </ligand>
</feature>
<feature type="binding site" evidence="1">
    <location>
        <position position="333"/>
    </location>
    <ligand>
        <name>UDP-N-acetyl-alpha-D-glucosamine</name>
        <dbReference type="ChEBI" id="CHEBI:57705"/>
    </ligand>
</feature>
<feature type="binding site" evidence="1">
    <location>
        <position position="348"/>
    </location>
    <ligand>
        <name>UDP-N-acetyl-alpha-D-glucosamine</name>
        <dbReference type="ChEBI" id="CHEBI:57705"/>
    </ligand>
</feature>
<feature type="binding site" evidence="1">
    <location>
        <position position="359"/>
    </location>
    <ligand>
        <name>UDP-N-acetyl-alpha-D-glucosamine</name>
        <dbReference type="ChEBI" id="CHEBI:57705"/>
    </ligand>
</feature>
<feature type="binding site" evidence="1">
    <location>
        <position position="362"/>
    </location>
    <ligand>
        <name>acetyl-CoA</name>
        <dbReference type="ChEBI" id="CHEBI:57288"/>
    </ligand>
</feature>
<feature type="binding site" evidence="1">
    <location>
        <begin position="368"/>
        <end position="369"/>
    </location>
    <ligand>
        <name>acetyl-CoA</name>
        <dbReference type="ChEBI" id="CHEBI:57288"/>
    </ligand>
</feature>
<feature type="binding site" evidence="1">
    <location>
        <position position="387"/>
    </location>
    <ligand>
        <name>acetyl-CoA</name>
        <dbReference type="ChEBI" id="CHEBI:57288"/>
    </ligand>
</feature>
<feature type="binding site" evidence="1">
    <location>
        <position position="405"/>
    </location>
    <ligand>
        <name>acetyl-CoA</name>
        <dbReference type="ChEBI" id="CHEBI:57288"/>
    </ligand>
</feature>
<feature type="binding site" evidence="1">
    <location>
        <position position="422"/>
    </location>
    <ligand>
        <name>acetyl-CoA</name>
        <dbReference type="ChEBI" id="CHEBI:57288"/>
    </ligand>
</feature>
<evidence type="ECO:0000255" key="1">
    <source>
        <dbReference type="HAMAP-Rule" id="MF_01631"/>
    </source>
</evidence>
<comment type="function">
    <text evidence="1">Catalyzes the last two sequential reactions in the de novo biosynthetic pathway for UDP-N-acetylglucosamine (UDP-GlcNAc). The C-terminal domain catalyzes the transfer of acetyl group from acetyl coenzyme A to glucosamine-1-phosphate (GlcN-1-P) to produce N-acetylglucosamine-1-phosphate (GlcNAc-1-P), which is converted into UDP-GlcNAc by the transfer of uridine 5-monophosphate (from uridine 5-triphosphate), a reaction catalyzed by the N-terminal domain.</text>
</comment>
<comment type="catalytic activity">
    <reaction evidence="1">
        <text>alpha-D-glucosamine 1-phosphate + acetyl-CoA = N-acetyl-alpha-D-glucosamine 1-phosphate + CoA + H(+)</text>
        <dbReference type="Rhea" id="RHEA:13725"/>
        <dbReference type="ChEBI" id="CHEBI:15378"/>
        <dbReference type="ChEBI" id="CHEBI:57287"/>
        <dbReference type="ChEBI" id="CHEBI:57288"/>
        <dbReference type="ChEBI" id="CHEBI:57776"/>
        <dbReference type="ChEBI" id="CHEBI:58516"/>
        <dbReference type="EC" id="2.3.1.157"/>
    </reaction>
</comment>
<comment type="catalytic activity">
    <reaction evidence="1">
        <text>N-acetyl-alpha-D-glucosamine 1-phosphate + UTP + H(+) = UDP-N-acetyl-alpha-D-glucosamine + diphosphate</text>
        <dbReference type="Rhea" id="RHEA:13509"/>
        <dbReference type="ChEBI" id="CHEBI:15378"/>
        <dbReference type="ChEBI" id="CHEBI:33019"/>
        <dbReference type="ChEBI" id="CHEBI:46398"/>
        <dbReference type="ChEBI" id="CHEBI:57705"/>
        <dbReference type="ChEBI" id="CHEBI:57776"/>
        <dbReference type="EC" id="2.7.7.23"/>
    </reaction>
</comment>
<comment type="cofactor">
    <cofactor evidence="1">
        <name>Mg(2+)</name>
        <dbReference type="ChEBI" id="CHEBI:18420"/>
    </cofactor>
    <text evidence="1">Binds 1 Mg(2+) ion per subunit.</text>
</comment>
<comment type="pathway">
    <text evidence="1">Nucleotide-sugar biosynthesis; UDP-N-acetyl-alpha-D-glucosamine biosynthesis; N-acetyl-alpha-D-glucosamine 1-phosphate from alpha-D-glucosamine 6-phosphate (route II): step 2/2.</text>
</comment>
<comment type="pathway">
    <text evidence="1">Nucleotide-sugar biosynthesis; UDP-N-acetyl-alpha-D-glucosamine biosynthesis; UDP-N-acetyl-alpha-D-glucosamine from N-acetyl-alpha-D-glucosamine 1-phosphate: step 1/1.</text>
</comment>
<comment type="pathway">
    <text evidence="1">Bacterial outer membrane biogenesis; LPS lipid A biosynthesis.</text>
</comment>
<comment type="subunit">
    <text evidence="1">Homotrimer.</text>
</comment>
<comment type="subcellular location">
    <subcellularLocation>
        <location evidence="1">Cytoplasm</location>
    </subcellularLocation>
</comment>
<comment type="similarity">
    <text evidence="1">In the N-terminal section; belongs to the N-acetylglucosamine-1-phosphate uridyltransferase family.</text>
</comment>
<comment type="similarity">
    <text evidence="1">In the C-terminal section; belongs to the transferase hexapeptide repeat family.</text>
</comment>
<proteinExistence type="inferred from homology"/>